<evidence type="ECO:0000255" key="1">
    <source>
        <dbReference type="HAMAP-Rule" id="MF_00379"/>
    </source>
</evidence>
<organism>
    <name type="scientific">Flavobacterium psychrophilum (strain ATCC 49511 / DSM 21280 / CIP 103535 / JIP02/86)</name>
    <dbReference type="NCBI Taxonomy" id="402612"/>
    <lineage>
        <taxon>Bacteria</taxon>
        <taxon>Pseudomonadati</taxon>
        <taxon>Bacteroidota</taxon>
        <taxon>Flavobacteriia</taxon>
        <taxon>Flavobacteriales</taxon>
        <taxon>Flavobacteriaceae</taxon>
        <taxon>Flavobacterium</taxon>
    </lineage>
</organism>
<name>MNME_FLAPJ</name>
<dbReference type="EC" id="3.6.-.-" evidence="1"/>
<dbReference type="EMBL" id="AM398681">
    <property type="protein sequence ID" value="CAL42735.1"/>
    <property type="molecule type" value="Genomic_DNA"/>
</dbReference>
<dbReference type="RefSeq" id="WP_011962791.1">
    <property type="nucleotide sequence ID" value="NC_009613.3"/>
</dbReference>
<dbReference type="RefSeq" id="YP_001295551.1">
    <property type="nucleotide sequence ID" value="NC_009613.3"/>
</dbReference>
<dbReference type="SMR" id="A6GXB2"/>
<dbReference type="STRING" id="402612.FP0630"/>
<dbReference type="EnsemblBacteria" id="CAL42735">
    <property type="protein sequence ID" value="CAL42735"/>
    <property type="gene ID" value="FP0630"/>
</dbReference>
<dbReference type="GeneID" id="66552689"/>
<dbReference type="KEGG" id="fps:FP0630"/>
<dbReference type="PATRIC" id="fig|402612.5.peg.648"/>
<dbReference type="eggNOG" id="COG0486">
    <property type="taxonomic scope" value="Bacteria"/>
</dbReference>
<dbReference type="HOGENOM" id="CLU_019624_4_1_10"/>
<dbReference type="OrthoDB" id="9805918at2"/>
<dbReference type="Proteomes" id="UP000006394">
    <property type="component" value="Chromosome"/>
</dbReference>
<dbReference type="GO" id="GO:0005829">
    <property type="term" value="C:cytosol"/>
    <property type="evidence" value="ECO:0007669"/>
    <property type="project" value="TreeGrafter"/>
</dbReference>
<dbReference type="GO" id="GO:0005525">
    <property type="term" value="F:GTP binding"/>
    <property type="evidence" value="ECO:0007669"/>
    <property type="project" value="UniProtKB-UniRule"/>
</dbReference>
<dbReference type="GO" id="GO:0003924">
    <property type="term" value="F:GTPase activity"/>
    <property type="evidence" value="ECO:0007669"/>
    <property type="project" value="UniProtKB-UniRule"/>
</dbReference>
<dbReference type="GO" id="GO:0046872">
    <property type="term" value="F:metal ion binding"/>
    <property type="evidence" value="ECO:0007669"/>
    <property type="project" value="UniProtKB-KW"/>
</dbReference>
<dbReference type="GO" id="GO:0030488">
    <property type="term" value="P:tRNA methylation"/>
    <property type="evidence" value="ECO:0007669"/>
    <property type="project" value="TreeGrafter"/>
</dbReference>
<dbReference type="GO" id="GO:0002098">
    <property type="term" value="P:tRNA wobble uridine modification"/>
    <property type="evidence" value="ECO:0007669"/>
    <property type="project" value="TreeGrafter"/>
</dbReference>
<dbReference type="CDD" id="cd04164">
    <property type="entry name" value="trmE"/>
    <property type="match status" value="1"/>
</dbReference>
<dbReference type="CDD" id="cd14858">
    <property type="entry name" value="TrmE_N"/>
    <property type="match status" value="1"/>
</dbReference>
<dbReference type="FunFam" id="3.30.1360.120:FF:000003">
    <property type="entry name" value="tRNA modification GTPase MnmE"/>
    <property type="match status" value="1"/>
</dbReference>
<dbReference type="FunFam" id="3.40.50.300:FF:001376">
    <property type="entry name" value="tRNA modification GTPase MnmE"/>
    <property type="match status" value="1"/>
</dbReference>
<dbReference type="Gene3D" id="3.40.50.300">
    <property type="entry name" value="P-loop containing nucleotide triphosphate hydrolases"/>
    <property type="match status" value="1"/>
</dbReference>
<dbReference type="Gene3D" id="3.30.1360.120">
    <property type="entry name" value="Probable tRNA modification gtpase trme, domain 1"/>
    <property type="match status" value="1"/>
</dbReference>
<dbReference type="Gene3D" id="1.20.120.430">
    <property type="entry name" value="tRNA modification GTPase MnmE domain 2"/>
    <property type="match status" value="1"/>
</dbReference>
<dbReference type="HAMAP" id="MF_00379">
    <property type="entry name" value="GTPase_MnmE"/>
    <property type="match status" value="1"/>
</dbReference>
<dbReference type="InterPro" id="IPR031168">
    <property type="entry name" value="G_TrmE"/>
</dbReference>
<dbReference type="InterPro" id="IPR006073">
    <property type="entry name" value="GTP-bd"/>
</dbReference>
<dbReference type="InterPro" id="IPR018948">
    <property type="entry name" value="GTP-bd_TrmE_N"/>
</dbReference>
<dbReference type="InterPro" id="IPR004520">
    <property type="entry name" value="GTPase_MnmE"/>
</dbReference>
<dbReference type="InterPro" id="IPR027368">
    <property type="entry name" value="MnmE_dom2"/>
</dbReference>
<dbReference type="InterPro" id="IPR025867">
    <property type="entry name" value="MnmE_helical"/>
</dbReference>
<dbReference type="InterPro" id="IPR027417">
    <property type="entry name" value="P-loop_NTPase"/>
</dbReference>
<dbReference type="InterPro" id="IPR005225">
    <property type="entry name" value="Small_GTP-bd"/>
</dbReference>
<dbReference type="InterPro" id="IPR027266">
    <property type="entry name" value="TrmE/GcvT_dom1"/>
</dbReference>
<dbReference type="NCBIfam" id="TIGR00450">
    <property type="entry name" value="mnmE_trmE_thdF"/>
    <property type="match status" value="1"/>
</dbReference>
<dbReference type="NCBIfam" id="NF003661">
    <property type="entry name" value="PRK05291.1-3"/>
    <property type="match status" value="1"/>
</dbReference>
<dbReference type="NCBIfam" id="TIGR00231">
    <property type="entry name" value="small_GTP"/>
    <property type="match status" value="1"/>
</dbReference>
<dbReference type="PANTHER" id="PTHR42714">
    <property type="entry name" value="TRNA MODIFICATION GTPASE GTPBP3"/>
    <property type="match status" value="1"/>
</dbReference>
<dbReference type="PANTHER" id="PTHR42714:SF2">
    <property type="entry name" value="TRNA MODIFICATION GTPASE GTPBP3, MITOCHONDRIAL"/>
    <property type="match status" value="1"/>
</dbReference>
<dbReference type="Pfam" id="PF01926">
    <property type="entry name" value="MMR_HSR1"/>
    <property type="match status" value="1"/>
</dbReference>
<dbReference type="Pfam" id="PF12631">
    <property type="entry name" value="MnmE_helical"/>
    <property type="match status" value="1"/>
</dbReference>
<dbReference type="Pfam" id="PF10396">
    <property type="entry name" value="TrmE_N"/>
    <property type="match status" value="1"/>
</dbReference>
<dbReference type="SUPFAM" id="SSF52540">
    <property type="entry name" value="P-loop containing nucleoside triphosphate hydrolases"/>
    <property type="match status" value="1"/>
</dbReference>
<dbReference type="SUPFAM" id="SSF116878">
    <property type="entry name" value="TrmE connector domain"/>
    <property type="match status" value="1"/>
</dbReference>
<dbReference type="PROSITE" id="PS51709">
    <property type="entry name" value="G_TRME"/>
    <property type="match status" value="1"/>
</dbReference>
<comment type="function">
    <text evidence="1">Exhibits a very high intrinsic GTPase hydrolysis rate. Involved in the addition of a carboxymethylaminomethyl (cmnm) group at the wobble position (U34) of certain tRNAs, forming tRNA-cmnm(5)s(2)U34.</text>
</comment>
<comment type="cofactor">
    <cofactor evidence="1">
        <name>K(+)</name>
        <dbReference type="ChEBI" id="CHEBI:29103"/>
    </cofactor>
    <text evidence="1">Binds 1 potassium ion per subunit.</text>
</comment>
<comment type="subunit">
    <text evidence="1">Homodimer. Heterotetramer of two MnmE and two MnmG subunits.</text>
</comment>
<comment type="subcellular location">
    <subcellularLocation>
        <location evidence="1">Cytoplasm</location>
    </subcellularLocation>
</comment>
<comment type="similarity">
    <text evidence="1">Belongs to the TRAFAC class TrmE-Era-EngA-EngB-Septin-like GTPase superfamily. TrmE GTPase family.</text>
</comment>
<protein>
    <recommendedName>
        <fullName evidence="1">tRNA modification GTPase MnmE</fullName>
        <ecNumber evidence="1">3.6.-.-</ecNumber>
    </recommendedName>
</protein>
<sequence>MIYHDTIVALATPSGAGAIAVIRISGNNAITIASEVFQSVSGKDITKQKSHTLHLGHITDGTKVLDQVLLSIFKGTNSYTGENTIEISCHGSTYIQQQIIQLLLRKGCRMAQAGEFTLRSFLNGKMDLSQAEAVADLISSDNEAAHQIAMQQMRGGFSNEIAKLREELLNFASLIELELDFAEEDVEFADRTQFDDLLNRIEFVLKRLIDSFAVGNVIKNGIPVAIVGEPNVGKSTLLNTLLNEERAIVSEIAGTTRDTIEDELVIGGIGFRFIDTAGIRETKDVVESIGIKKTFEKIEQSQVVVFLFDSSEFKISGLKLKVALEKIKNQFPLKPLIIIGNKSDKLSETEIQNIKTEIPEILLISAKEKLGVEDLKNQLLSFVNTGALRNNQTIVTNTRHYDSLLKALDEIQKVKFGLQTNLPSDLMAIDIKQALYYFGEITGQVTNDELLGNIFANFCIGK</sequence>
<reference key="1">
    <citation type="journal article" date="2007" name="Nat. Biotechnol.">
        <title>Complete genome sequence of the fish pathogen Flavobacterium psychrophilum.</title>
        <authorList>
            <person name="Duchaud E."/>
            <person name="Boussaha M."/>
            <person name="Loux V."/>
            <person name="Bernardet J.-F."/>
            <person name="Michel C."/>
            <person name="Kerouault B."/>
            <person name="Mondot S."/>
            <person name="Nicolas P."/>
            <person name="Bossy R."/>
            <person name="Caron C."/>
            <person name="Bessieres P."/>
            <person name="Gibrat J.-F."/>
            <person name="Claverol S."/>
            <person name="Dumetz F."/>
            <person name="Le Henaff M."/>
            <person name="Benmansour A."/>
        </authorList>
    </citation>
    <scope>NUCLEOTIDE SEQUENCE [LARGE SCALE GENOMIC DNA]</scope>
    <source>
        <strain>ATCC 49511 / DSM 21280 / CIP 103535 / JIP02/86</strain>
    </source>
</reference>
<feature type="chain" id="PRO_0000345788" description="tRNA modification GTPase MnmE">
    <location>
        <begin position="1"/>
        <end position="462"/>
    </location>
</feature>
<feature type="domain" description="TrmE-type G">
    <location>
        <begin position="221"/>
        <end position="384"/>
    </location>
</feature>
<feature type="binding site" evidence="1">
    <location>
        <position position="23"/>
    </location>
    <ligand>
        <name>(6S)-5-formyl-5,6,7,8-tetrahydrofolate</name>
        <dbReference type="ChEBI" id="CHEBI:57457"/>
    </ligand>
</feature>
<feature type="binding site" evidence="1">
    <location>
        <position position="86"/>
    </location>
    <ligand>
        <name>(6S)-5-formyl-5,6,7,8-tetrahydrofolate</name>
        <dbReference type="ChEBI" id="CHEBI:57457"/>
    </ligand>
</feature>
<feature type="binding site" evidence="1">
    <location>
        <position position="125"/>
    </location>
    <ligand>
        <name>(6S)-5-formyl-5,6,7,8-tetrahydrofolate</name>
        <dbReference type="ChEBI" id="CHEBI:57457"/>
    </ligand>
</feature>
<feature type="binding site" evidence="1">
    <location>
        <begin position="231"/>
        <end position="236"/>
    </location>
    <ligand>
        <name>GTP</name>
        <dbReference type="ChEBI" id="CHEBI:37565"/>
    </ligand>
</feature>
<feature type="binding site" evidence="1">
    <location>
        <position position="231"/>
    </location>
    <ligand>
        <name>K(+)</name>
        <dbReference type="ChEBI" id="CHEBI:29103"/>
    </ligand>
</feature>
<feature type="binding site" evidence="1">
    <location>
        <position position="235"/>
    </location>
    <ligand>
        <name>Mg(2+)</name>
        <dbReference type="ChEBI" id="CHEBI:18420"/>
    </ligand>
</feature>
<feature type="binding site" evidence="1">
    <location>
        <begin position="250"/>
        <end position="256"/>
    </location>
    <ligand>
        <name>GTP</name>
        <dbReference type="ChEBI" id="CHEBI:37565"/>
    </ligand>
</feature>
<feature type="binding site" evidence="1">
    <location>
        <position position="250"/>
    </location>
    <ligand>
        <name>K(+)</name>
        <dbReference type="ChEBI" id="CHEBI:29103"/>
    </ligand>
</feature>
<feature type="binding site" evidence="1">
    <location>
        <position position="252"/>
    </location>
    <ligand>
        <name>K(+)</name>
        <dbReference type="ChEBI" id="CHEBI:29103"/>
    </ligand>
</feature>
<feature type="binding site" evidence="1">
    <location>
        <position position="255"/>
    </location>
    <ligand>
        <name>K(+)</name>
        <dbReference type="ChEBI" id="CHEBI:29103"/>
    </ligand>
</feature>
<feature type="binding site" evidence="1">
    <location>
        <position position="256"/>
    </location>
    <ligand>
        <name>Mg(2+)</name>
        <dbReference type="ChEBI" id="CHEBI:18420"/>
    </ligand>
</feature>
<feature type="binding site" evidence="1">
    <location>
        <begin position="275"/>
        <end position="278"/>
    </location>
    <ligand>
        <name>GTP</name>
        <dbReference type="ChEBI" id="CHEBI:37565"/>
    </ligand>
</feature>
<feature type="binding site" evidence="1">
    <location>
        <position position="462"/>
    </location>
    <ligand>
        <name>(6S)-5-formyl-5,6,7,8-tetrahydrofolate</name>
        <dbReference type="ChEBI" id="CHEBI:57457"/>
    </ligand>
</feature>
<accession>A6GXB2</accession>
<proteinExistence type="inferred from homology"/>
<gene>
    <name evidence="1" type="primary">mnmE</name>
    <name evidence="1" type="synonym">trmE</name>
    <name type="ordered locus">FP0630</name>
</gene>
<keyword id="KW-0963">Cytoplasm</keyword>
<keyword id="KW-0342">GTP-binding</keyword>
<keyword id="KW-0378">Hydrolase</keyword>
<keyword id="KW-0460">Magnesium</keyword>
<keyword id="KW-0479">Metal-binding</keyword>
<keyword id="KW-0547">Nucleotide-binding</keyword>
<keyword id="KW-0630">Potassium</keyword>
<keyword id="KW-1185">Reference proteome</keyword>
<keyword id="KW-0819">tRNA processing</keyword>